<evidence type="ECO:0000250" key="1"/>
<evidence type="ECO:0000250" key="2">
    <source>
        <dbReference type="UniProtKB" id="P01034"/>
    </source>
</evidence>
<evidence type="ECO:0000255" key="3">
    <source>
        <dbReference type="PROSITE-ProRule" id="PRU00862"/>
    </source>
</evidence>
<evidence type="ECO:0000269" key="4">
    <source>
    </source>
</evidence>
<evidence type="ECO:0000305" key="5"/>
<evidence type="ECO:0000305" key="6">
    <source>
    </source>
</evidence>
<dbReference type="SMR" id="P81714"/>
<dbReference type="MEROPS" id="I25.012"/>
<dbReference type="GO" id="GO:0070062">
    <property type="term" value="C:extracellular exosome"/>
    <property type="evidence" value="ECO:0007669"/>
    <property type="project" value="TreeGrafter"/>
</dbReference>
<dbReference type="GO" id="GO:0004869">
    <property type="term" value="F:cysteine-type endopeptidase inhibitor activity"/>
    <property type="evidence" value="ECO:0007669"/>
    <property type="project" value="UniProtKB-KW"/>
</dbReference>
<dbReference type="CDD" id="cd00042">
    <property type="entry name" value="CY"/>
    <property type="match status" value="1"/>
</dbReference>
<dbReference type="FunFam" id="3.10.450.10:FF:000004">
    <property type="entry name" value="Cystatin C"/>
    <property type="match status" value="1"/>
</dbReference>
<dbReference type="Gene3D" id="3.10.450.10">
    <property type="match status" value="1"/>
</dbReference>
<dbReference type="InterPro" id="IPR000010">
    <property type="entry name" value="Cystatin_dom"/>
</dbReference>
<dbReference type="InterPro" id="IPR046350">
    <property type="entry name" value="Cystatin_sf"/>
</dbReference>
<dbReference type="PANTHER" id="PTHR47033">
    <property type="entry name" value="CYSTATIN-M"/>
    <property type="match status" value="1"/>
</dbReference>
<dbReference type="PANTHER" id="PTHR47033:SF1">
    <property type="entry name" value="CYSTATIN-M"/>
    <property type="match status" value="1"/>
</dbReference>
<dbReference type="Pfam" id="PF00031">
    <property type="entry name" value="Cystatin"/>
    <property type="match status" value="1"/>
</dbReference>
<dbReference type="SMART" id="SM00043">
    <property type="entry name" value="CY"/>
    <property type="match status" value="1"/>
</dbReference>
<dbReference type="SUPFAM" id="SSF54403">
    <property type="entry name" value="Cystatin/monellin"/>
    <property type="match status" value="1"/>
</dbReference>
<comment type="function">
    <text evidence="4">Inhibits various C1 cysteine proteases including cathepsin L (Ki is 0.1 nM), papain (Ki is 0.19 nM), cathepsin S (Ki is 1.2 nM), and cathepsin B (Ki is 2.5 nM). This protein has no toxic activity and its function in the venom is unknown. It may play a role as housekeeping or regulatory protein.</text>
</comment>
<comment type="subcellular location">
    <subcellularLocation>
        <location>Secreted</location>
    </subcellularLocation>
</comment>
<comment type="tissue specificity">
    <text>Expressed by the venom gland.</text>
</comment>
<comment type="miscellaneous">
    <text evidence="6">Negative results: does not inhibit calpain.</text>
</comment>
<comment type="similarity">
    <text evidence="5">Belongs to the cystatin family.</text>
</comment>
<accession>P81714</accession>
<organism>
    <name type="scientific">Naja atra</name>
    <name type="common">Chinese cobra</name>
    <dbReference type="NCBI Taxonomy" id="8656"/>
    <lineage>
        <taxon>Eukaryota</taxon>
        <taxon>Metazoa</taxon>
        <taxon>Chordata</taxon>
        <taxon>Craniata</taxon>
        <taxon>Vertebrata</taxon>
        <taxon>Euteleostomi</taxon>
        <taxon>Lepidosauria</taxon>
        <taxon>Squamata</taxon>
        <taxon>Bifurcata</taxon>
        <taxon>Unidentata</taxon>
        <taxon>Episquamata</taxon>
        <taxon>Toxicofera</taxon>
        <taxon>Serpentes</taxon>
        <taxon>Colubroidea</taxon>
        <taxon>Elapidae</taxon>
        <taxon>Elapinae</taxon>
        <taxon>Naja</taxon>
    </lineage>
</organism>
<protein>
    <recommendedName>
        <fullName>Cystatin</fullName>
    </recommendedName>
</protein>
<reference key="1">
    <citation type="journal article" date="1998" name="Biochem. J.">
        <title>Purification and characterization of a new cystatin inhibitor from Taiwan cobra (Naja naja atra) venom.</title>
        <authorList>
            <person name="Brillard-Bourdet M."/>
            <person name="Nguyen V."/>
            <person name="Ferrer-Di Martino M."/>
            <person name="Gauthier F."/>
            <person name="Moreau T."/>
        </authorList>
    </citation>
    <scope>PROTEIN SEQUENCE</scope>
    <scope>FUNCTION</scope>
    <source>
        <tissue>Venom</tissue>
    </source>
</reference>
<name>CYT_NAJAT</name>
<feature type="chain" id="PRO_0000207153" description="Cystatin">
    <location>
        <begin position="1"/>
        <end position="99" status="greater than"/>
    </location>
</feature>
<feature type="domain" description="Cystatin">
    <location>
        <begin position="3"/>
        <end position="99" status="greater than"/>
    </location>
</feature>
<feature type="short sequence motif" description="Secondary area of contact" evidence="1">
    <location>
        <begin position="47"/>
        <end position="51"/>
    </location>
</feature>
<feature type="site" description="Reactive site" evidence="1">
    <location>
        <position position="3"/>
    </location>
</feature>
<feature type="disulfide bond" evidence="2 3">
    <location>
        <begin position="65"/>
        <end position="81"/>
    </location>
</feature>
<feature type="disulfide bond" evidence="2">
    <location>
        <begin position="94"/>
        <end status="unknown"/>
    </location>
</feature>
<feature type="non-terminal residue" evidence="6">
    <location>
        <position position="99"/>
    </location>
</feature>
<sequence length="99" mass="10995">IPGGLSPRSVSDPDVQKAAAFAVQEYNAGSANAHYYKELRVVEAQSQSVAGEKYFLMMELVKTKCAKTAGKPKVYKEIQNCELPPIKQQEEKLCGFQVW</sequence>
<proteinExistence type="evidence at protein level"/>
<keyword id="KW-0903">Direct protein sequencing</keyword>
<keyword id="KW-1015">Disulfide bond</keyword>
<keyword id="KW-0646">Protease inhibitor</keyword>
<keyword id="KW-0964">Secreted</keyword>
<keyword id="KW-0789">Thiol protease inhibitor</keyword>